<gene>
    <name type="primary">SNX5</name>
</gene>
<proteinExistence type="evidence at transcript level"/>
<accession>Q3ZBM5</accession>
<reference key="1">
    <citation type="submission" date="2005-08" db="EMBL/GenBank/DDBJ databases">
        <authorList>
            <consortium name="NIH - Mammalian Gene Collection (MGC) project"/>
        </authorList>
    </citation>
    <scope>NUCLEOTIDE SEQUENCE [LARGE SCALE MRNA]</scope>
    <source>
        <strain>Hereford</strain>
        <tissue>Hypothalamus</tissue>
    </source>
</reference>
<comment type="function">
    <text evidence="3">Involved in several stages of intracellular trafficking. Interacts with membranes containing phosphatidylinositol lipids. Acts in part as component of the retromer membrane-deforming SNX-BAR subcomplex. The SNX-BAR retromer mediates retrograde transport of cargo proteins from endosomes to the trans-Golgi network (TGN) and is involved in endosome-to-plasma membrane transport for cargo protein recycling. The SNX-BAR subcomplex functions to deform the donor membrane into a tubular profile called endosome-to-TGN transport carrier (ETC). Does not have in vitro vesicle-to-membrane remodeling activity. Involved in retrograde transport of lysosomal enzyme receptor IGF2R. May function as link between endosomal transport vesicles and dynactin. Plays a role in the internalization of EGFR after EGF stimulation. Involved in EGFR endosomal sorting and degradation; the function involves PIP5K1C and is retromer-independent. Together with PIP5K1C facilitates HGS interaction with ubiquitinated EGFR, which initiates EGFR sorting to intraluminal vesicles (ILVs) of the multivesicular body for subsequent lysosomal degradation. Involved in E-cadherin sorting and degradation; inhibits PIP5K1C-mediated E-cadherin degradation. Plays a role in macropinocytosis (By similarity).</text>
</comment>
<comment type="subunit">
    <text evidence="3">Forms heterodimers with BAR domain-containing sorting nexins SNX1 and SNX2; does not homodimerize. The heterodimers are proposed to self-assemble into helical arrays on the membrane to stabilize and expand local membrane curvature underlying endosomal tubule formation. Thought to be a component of the originally described retromer complex (also called SNX-BAR retromer) which is a pentamer containing the heterotrimeric retromer cargo-selective complex (CSC), also described as vacuolar protein sorting subcomplex (VPS), and a heterodimeric membrane-deforming subcomplex formed between SNX1 or SNX2 and SNX5 or SNX6 (also called SNX-BAR subcomplex); the respective CSC and SNX-BAR subcomplexes associate with low affinity. Interacts with SNX1, SNX2, VPS26A, VPS29, VPS35, DCTN1, DOCK1, MIB1, PIP5K1C. Interacts with HGS; increased by PIP5K1C kinase activity and by PtdIns(3P) and/or PtdIns(3,4)P2 (By similarity).</text>
</comment>
<comment type="subcellular location">
    <subcellularLocation>
        <location evidence="3">Endosome</location>
    </subcellularLocation>
    <subcellularLocation>
        <location evidence="3">Early endosome</location>
    </subcellularLocation>
    <subcellularLocation>
        <location evidence="3">Early endosome membrane</location>
        <topology>Peripheral membrane protein</topology>
        <orientation>Cytoplasmic side</orientation>
    </subcellularLocation>
    <subcellularLocation>
        <location evidence="3">Cell membrane</location>
        <topology>Peripheral membrane protein</topology>
        <orientation evidence="3">Cytoplasmic side</orientation>
    </subcellularLocation>
    <subcellularLocation>
        <location>Cytoplasmic vesicle membrane</location>
        <topology>Peripheral membrane protein</topology>
        <orientation>Cytoplasmic side</orientation>
    </subcellularLocation>
    <subcellularLocation>
        <location>Cytoplasm</location>
    </subcellularLocation>
    <subcellularLocation>
        <location>Cell projection</location>
        <location>Phagocytic cup</location>
    </subcellularLocation>
    <subcellularLocation>
        <location>Cell projection</location>
        <location>Ruffle</location>
    </subcellularLocation>
    <text evidence="3">Recruited to the plasma membrane after EGF stimulation, which leads to increased levels of phosphatidylinositol 3,4-bisphosphate (PdtIns(3,4)P2). Detected on macropinosomes. Targeted to membrane ruffles in response to EGFR stimulation (By similarity).</text>
</comment>
<comment type="domain">
    <text evidence="1">The PX domain mediates interaction with membranes enriched in phosphatidylinositol 3,4-bisphosphate and/or phosphatidylinositol 4,5-bisphosphate.</text>
</comment>
<comment type="domain">
    <text evidence="3">The BAR domain is able to sense membrane curvature upon dimerization. Membrane remodeling seems to implicate insertion of an amphipathic helix (AH) in the membrane (By similarity).</text>
</comment>
<comment type="similarity">
    <text evidence="5">Belongs to the sorting nexin family.</text>
</comment>
<comment type="caution">
    <text evidence="5">The selectivity for particular phosphatidylinositol lipids is under debate. According to one report (PubMed:19553671), the rat protein binds exclusively to phosphatidylinositol 4,5-bisphosphate, while the human protein has been reported (PubMed:15561769) to bind to phosphatidylinositol 3,4-bisphosphate and also to phosphatidylinositol 3-phosphate.</text>
</comment>
<name>SNX5_BOVIN</name>
<feature type="initiator methionine" description="Removed" evidence="3">
    <location>
        <position position="1"/>
    </location>
</feature>
<feature type="chain" id="PRO_0000236191" description="Sorting nexin-5">
    <location>
        <begin position="2"/>
        <end position="404"/>
    </location>
</feature>
<feature type="domain" description="PX" evidence="4">
    <location>
        <begin position="25"/>
        <end position="172"/>
    </location>
</feature>
<feature type="domain" description="BAR">
    <location>
        <begin position="202"/>
        <end position="404"/>
    </location>
</feature>
<feature type="region of interest" description="Interaction with DOCK1" evidence="3">
    <location>
        <begin position="169"/>
        <end position="261"/>
    </location>
</feature>
<feature type="region of interest" description="Membrane-binding amphipathic helix" evidence="3">
    <location>
        <begin position="183"/>
        <end position="200"/>
    </location>
</feature>
<feature type="binding site" evidence="2">
    <location>
        <begin position="40"/>
        <end position="46"/>
    </location>
    <ligand>
        <name>a 1,2-diacyl-sn-glycero-3-phospho-(1D-myo-inositol-4,5-bisphosphate)</name>
        <dbReference type="ChEBI" id="CHEBI:58456"/>
    </ligand>
</feature>
<feature type="binding site" evidence="2">
    <location>
        <begin position="99"/>
        <end position="105"/>
    </location>
    <ligand>
        <name>a 1,2-diacyl-sn-glycero-3-phospho-(1D-myo-inositol-4,5-bisphosphate)</name>
        <dbReference type="ChEBI" id="CHEBI:58456"/>
    </ligand>
</feature>
<feature type="binding site" evidence="2">
    <location>
        <begin position="113"/>
        <end position="116"/>
    </location>
    <ligand>
        <name>a 1,2-diacyl-sn-glycero-3-phospho-(1D-myo-inositol-4,5-bisphosphate)</name>
        <dbReference type="ChEBI" id="CHEBI:58456"/>
    </ligand>
</feature>
<feature type="modified residue" description="N-acetylalanine" evidence="3">
    <location>
        <position position="2"/>
    </location>
</feature>
<feature type="modified residue" description="Phosphoserine" evidence="3">
    <location>
        <position position="193"/>
    </location>
</feature>
<feature type="modified residue" description="N6-acetyllysine" evidence="3">
    <location>
        <position position="275"/>
    </location>
</feature>
<protein>
    <recommendedName>
        <fullName>Sorting nexin-5</fullName>
    </recommendedName>
</protein>
<sequence>MAAVPEVLQQQEEDRSKLRSVSVDLNVDPSLQIDIPDALSERDKVKFTVHTKTTLPTFQSPEFSVTRQHEDFVWLHDTLIETTDYAGLIIPPAPTKPDFDGPREKMQKLGEGEGSMTKEEFAKMKQELEAEYLAVFKKTVSSHEVFLQRLSSHPVLSKDRNFHVFLEYDQDLSVRRKNTKEMFGGFFKSVVKSADEVLFSGVKEVDDFFEQEKTFLINYYNRIKDSCAKADRMTRSHKNVADDYIHTAACLHSLALEEPTVIKKYLLKVAELFEKLRKVESRVSSDEDLKLTELLRYYMLNIEAAKDLLYRRTKALIDYENSNKALDKARLKSRDVKLAEAHQQECCQKFEQLSESAKDELINFKRKRVAAFRKNLIEMSELEIKHARNNVSLLQSCIDLFKNN</sequence>
<dbReference type="EMBL" id="BC103213">
    <property type="protein sequence ID" value="AAI03214.1"/>
    <property type="molecule type" value="mRNA"/>
</dbReference>
<dbReference type="RefSeq" id="NP_001029636.1">
    <property type="nucleotide sequence ID" value="NM_001034464.2"/>
</dbReference>
<dbReference type="RefSeq" id="XP_005214402.1">
    <property type="nucleotide sequence ID" value="XM_005214345.3"/>
</dbReference>
<dbReference type="RefSeq" id="XP_015329515.1">
    <property type="nucleotide sequence ID" value="XM_015474029.1"/>
</dbReference>
<dbReference type="SMR" id="Q3ZBM5"/>
<dbReference type="FunCoup" id="Q3ZBM5">
    <property type="interactions" value="4471"/>
</dbReference>
<dbReference type="STRING" id="9913.ENSBTAP00000039205"/>
<dbReference type="PaxDb" id="9913-ENSBTAP00000039205"/>
<dbReference type="GeneID" id="514423"/>
<dbReference type="KEGG" id="bta:514423"/>
<dbReference type="CTD" id="27131"/>
<dbReference type="VEuPathDB" id="HostDB:ENSBTAG00000003422"/>
<dbReference type="eggNOG" id="KOG1660">
    <property type="taxonomic scope" value="Eukaryota"/>
</dbReference>
<dbReference type="HOGENOM" id="CLU_040966_0_0_1"/>
<dbReference type="InParanoid" id="Q3ZBM5"/>
<dbReference type="OMA" id="ECCQRFE"/>
<dbReference type="OrthoDB" id="9976382at2759"/>
<dbReference type="TreeFam" id="TF313698"/>
<dbReference type="Reactome" id="R-BTA-432722">
    <property type="pathway name" value="Golgi Associated Vesicle Biogenesis"/>
</dbReference>
<dbReference type="Proteomes" id="UP000009136">
    <property type="component" value="Chromosome 13"/>
</dbReference>
<dbReference type="Bgee" id="ENSBTAG00000003422">
    <property type="expression patterns" value="Expressed in corpus epididymis and 108 other cell types or tissues"/>
</dbReference>
<dbReference type="GO" id="GO:0098559">
    <property type="term" value="C:cytoplasmic side of early endosome membrane"/>
    <property type="evidence" value="ECO:0000250"/>
    <property type="project" value="UniProtKB"/>
</dbReference>
<dbReference type="GO" id="GO:0009898">
    <property type="term" value="C:cytoplasmic side of plasma membrane"/>
    <property type="evidence" value="ECO:0000250"/>
    <property type="project" value="UniProtKB"/>
</dbReference>
<dbReference type="GO" id="GO:0005829">
    <property type="term" value="C:cytosol"/>
    <property type="evidence" value="ECO:0007669"/>
    <property type="project" value="GOC"/>
</dbReference>
<dbReference type="GO" id="GO:0005768">
    <property type="term" value="C:endosome"/>
    <property type="evidence" value="ECO:0000318"/>
    <property type="project" value="GO_Central"/>
</dbReference>
<dbReference type="GO" id="GO:0070685">
    <property type="term" value="C:macropinocytic cup"/>
    <property type="evidence" value="ECO:0000250"/>
    <property type="project" value="UniProtKB"/>
</dbReference>
<dbReference type="GO" id="GO:0001891">
    <property type="term" value="C:phagocytic cup"/>
    <property type="evidence" value="ECO:0007669"/>
    <property type="project" value="UniProtKB-SubCell"/>
</dbReference>
<dbReference type="GO" id="GO:0001726">
    <property type="term" value="C:ruffle"/>
    <property type="evidence" value="ECO:0007669"/>
    <property type="project" value="UniProtKB-SubCell"/>
</dbReference>
<dbReference type="GO" id="GO:0034452">
    <property type="term" value="F:dynactin binding"/>
    <property type="evidence" value="ECO:0000318"/>
    <property type="project" value="GO_Central"/>
</dbReference>
<dbReference type="GO" id="GO:0035091">
    <property type="term" value="F:phosphatidylinositol binding"/>
    <property type="evidence" value="ECO:0000250"/>
    <property type="project" value="UniProtKB"/>
</dbReference>
<dbReference type="GO" id="GO:0006886">
    <property type="term" value="P:intracellular protein transport"/>
    <property type="evidence" value="ECO:0007669"/>
    <property type="project" value="InterPro"/>
</dbReference>
<dbReference type="GO" id="GO:0006907">
    <property type="term" value="P:pinocytosis"/>
    <property type="evidence" value="ECO:0000250"/>
    <property type="project" value="UniProtKB"/>
</dbReference>
<dbReference type="GO" id="GO:0042147">
    <property type="term" value="P:retrograde transport, endosome to Golgi"/>
    <property type="evidence" value="ECO:0000318"/>
    <property type="project" value="GO_Central"/>
</dbReference>
<dbReference type="CDD" id="cd07663">
    <property type="entry name" value="BAR_SNX5"/>
    <property type="match status" value="1"/>
</dbReference>
<dbReference type="CDD" id="cd07291">
    <property type="entry name" value="PX_SNX5"/>
    <property type="match status" value="1"/>
</dbReference>
<dbReference type="FunFam" id="1.20.1270.60:FF:000008">
    <property type="entry name" value="Sorting nexin"/>
    <property type="match status" value="1"/>
</dbReference>
<dbReference type="FunFam" id="3.30.1520.10:FF:000001">
    <property type="entry name" value="Sorting nexin"/>
    <property type="match status" value="1"/>
</dbReference>
<dbReference type="Gene3D" id="1.20.1270.60">
    <property type="entry name" value="Arfaptin homology (AH) domain/BAR domain"/>
    <property type="match status" value="1"/>
</dbReference>
<dbReference type="Gene3D" id="3.30.1520.10">
    <property type="entry name" value="Phox-like domain"/>
    <property type="match status" value="1"/>
</dbReference>
<dbReference type="InterPro" id="IPR027267">
    <property type="entry name" value="AH/BAR_dom_sf"/>
</dbReference>
<dbReference type="InterPro" id="IPR028654">
    <property type="entry name" value="BAR_SNX5"/>
</dbReference>
<dbReference type="InterPro" id="IPR001683">
    <property type="entry name" value="PX_dom"/>
</dbReference>
<dbReference type="InterPro" id="IPR036871">
    <property type="entry name" value="PX_dom_sf"/>
</dbReference>
<dbReference type="InterPro" id="IPR042135">
    <property type="entry name" value="PX_SNX5"/>
</dbReference>
<dbReference type="InterPro" id="IPR014637">
    <property type="entry name" value="SNX5/SNX6/SNX32"/>
</dbReference>
<dbReference type="InterPro" id="IPR015404">
    <property type="entry name" value="Vps5_C"/>
</dbReference>
<dbReference type="PANTHER" id="PTHR45850">
    <property type="entry name" value="SORTING NEXIN FAMILY MEMBER"/>
    <property type="match status" value="1"/>
</dbReference>
<dbReference type="PANTHER" id="PTHR45850:SF5">
    <property type="entry name" value="SORTING NEXIN-5"/>
    <property type="match status" value="1"/>
</dbReference>
<dbReference type="Pfam" id="PF00787">
    <property type="entry name" value="PX"/>
    <property type="match status" value="1"/>
</dbReference>
<dbReference type="Pfam" id="PF09325">
    <property type="entry name" value="Vps5"/>
    <property type="match status" value="1"/>
</dbReference>
<dbReference type="PIRSF" id="PIRSF036924">
    <property type="entry name" value="Snx5_Snx6"/>
    <property type="match status" value="1"/>
</dbReference>
<dbReference type="SUPFAM" id="SSF103657">
    <property type="entry name" value="BAR/IMD domain-like"/>
    <property type="match status" value="1"/>
</dbReference>
<dbReference type="SUPFAM" id="SSF64268">
    <property type="entry name" value="PX domain"/>
    <property type="match status" value="1"/>
</dbReference>
<dbReference type="PROSITE" id="PS50195">
    <property type="entry name" value="PX"/>
    <property type="match status" value="1"/>
</dbReference>
<keyword id="KW-0007">Acetylation</keyword>
<keyword id="KW-1003">Cell membrane</keyword>
<keyword id="KW-0966">Cell projection</keyword>
<keyword id="KW-0963">Cytoplasm</keyword>
<keyword id="KW-0968">Cytoplasmic vesicle</keyword>
<keyword id="KW-0254">Endocytosis</keyword>
<keyword id="KW-0967">Endosome</keyword>
<keyword id="KW-0446">Lipid-binding</keyword>
<keyword id="KW-0472">Membrane</keyword>
<keyword id="KW-0597">Phosphoprotein</keyword>
<keyword id="KW-0653">Protein transport</keyword>
<keyword id="KW-1185">Reference proteome</keyword>
<keyword id="KW-0813">Transport</keyword>
<organism>
    <name type="scientific">Bos taurus</name>
    <name type="common">Bovine</name>
    <dbReference type="NCBI Taxonomy" id="9913"/>
    <lineage>
        <taxon>Eukaryota</taxon>
        <taxon>Metazoa</taxon>
        <taxon>Chordata</taxon>
        <taxon>Craniata</taxon>
        <taxon>Vertebrata</taxon>
        <taxon>Euteleostomi</taxon>
        <taxon>Mammalia</taxon>
        <taxon>Eutheria</taxon>
        <taxon>Laurasiatheria</taxon>
        <taxon>Artiodactyla</taxon>
        <taxon>Ruminantia</taxon>
        <taxon>Pecora</taxon>
        <taxon>Bovidae</taxon>
        <taxon>Bovinae</taxon>
        <taxon>Bos</taxon>
    </lineage>
</organism>
<evidence type="ECO:0000250" key="1"/>
<evidence type="ECO:0000250" key="2">
    <source>
        <dbReference type="UniProtKB" id="B1H267"/>
    </source>
</evidence>
<evidence type="ECO:0000250" key="3">
    <source>
        <dbReference type="UniProtKB" id="Q9Y5X3"/>
    </source>
</evidence>
<evidence type="ECO:0000255" key="4">
    <source>
        <dbReference type="PROSITE-ProRule" id="PRU00147"/>
    </source>
</evidence>
<evidence type="ECO:0000305" key="5"/>